<evidence type="ECO:0000250" key="1"/>
<evidence type="ECO:0000250" key="2">
    <source>
        <dbReference type="UniProtKB" id="P07550"/>
    </source>
</evidence>
<evidence type="ECO:0000255" key="3"/>
<evidence type="ECO:0000255" key="4">
    <source>
        <dbReference type="PROSITE-ProRule" id="PRU00521"/>
    </source>
</evidence>
<evidence type="ECO:0000256" key="5">
    <source>
        <dbReference type="SAM" id="MobiDB-lite"/>
    </source>
</evidence>
<evidence type="ECO:0000269" key="6">
    <source>
    </source>
</evidence>
<evidence type="ECO:0000305" key="7"/>
<protein>
    <recommendedName>
        <fullName>Beta-2 adrenergic receptor</fullName>
    </recommendedName>
    <alternativeName>
        <fullName>Beta-2 adrenoreceptor</fullName>
        <shortName>Beta-2 adrenoceptor</shortName>
    </alternativeName>
</protein>
<dbReference type="EMBL" id="AF000134">
    <property type="protein sequence ID" value="AAB58713.1"/>
    <property type="molecule type" value="Genomic_DNA"/>
</dbReference>
<dbReference type="EMBL" id="AY526088">
    <property type="protein sequence ID" value="AAS18308.1"/>
    <property type="molecule type" value="Genomic_DNA"/>
</dbReference>
<dbReference type="EMBL" id="U53185">
    <property type="protein sequence ID" value="AAB01978.1"/>
    <property type="molecule type" value="mRNA"/>
</dbReference>
<dbReference type="RefSeq" id="NP_001121908.1">
    <property type="nucleotide sequence ID" value="NM_001128436.1"/>
</dbReference>
<dbReference type="SMR" id="Q28997"/>
<dbReference type="FunCoup" id="Q28997">
    <property type="interactions" value="175"/>
</dbReference>
<dbReference type="STRING" id="9823.ENSSSCP00000049170"/>
<dbReference type="ChEMBL" id="CHEMBL3801"/>
<dbReference type="GlyCosmos" id="Q28997">
    <property type="glycosylation" value="2 sites, No reported glycans"/>
</dbReference>
<dbReference type="GlyGen" id="Q28997">
    <property type="glycosylation" value="2 sites"/>
</dbReference>
<dbReference type="GeneID" id="397357"/>
<dbReference type="KEGG" id="ssc:397357"/>
<dbReference type="CTD" id="154"/>
<dbReference type="InParanoid" id="Q28997"/>
<dbReference type="OrthoDB" id="5975661at2759"/>
<dbReference type="PRO" id="PR:Q28997"/>
<dbReference type="Proteomes" id="UP000008227">
    <property type="component" value="Unplaced"/>
</dbReference>
<dbReference type="Proteomes" id="UP000314985">
    <property type="component" value="Unplaced"/>
</dbReference>
<dbReference type="Proteomes" id="UP000694570">
    <property type="component" value="Unplaced"/>
</dbReference>
<dbReference type="Proteomes" id="UP000694571">
    <property type="component" value="Unplaced"/>
</dbReference>
<dbReference type="Proteomes" id="UP000694720">
    <property type="component" value="Unplaced"/>
</dbReference>
<dbReference type="Proteomes" id="UP000694722">
    <property type="component" value="Unplaced"/>
</dbReference>
<dbReference type="Proteomes" id="UP000694723">
    <property type="component" value="Unplaced"/>
</dbReference>
<dbReference type="Proteomes" id="UP000694724">
    <property type="component" value="Unplaced"/>
</dbReference>
<dbReference type="Proteomes" id="UP000694725">
    <property type="component" value="Unplaced"/>
</dbReference>
<dbReference type="Proteomes" id="UP000694726">
    <property type="component" value="Unplaced"/>
</dbReference>
<dbReference type="Proteomes" id="UP000694727">
    <property type="component" value="Unplaced"/>
</dbReference>
<dbReference type="Proteomes" id="UP000694728">
    <property type="component" value="Unplaced"/>
</dbReference>
<dbReference type="GO" id="GO:0005769">
    <property type="term" value="C:early endosome"/>
    <property type="evidence" value="ECO:0007669"/>
    <property type="project" value="UniProtKB-SubCell"/>
</dbReference>
<dbReference type="GO" id="GO:0005794">
    <property type="term" value="C:Golgi apparatus"/>
    <property type="evidence" value="ECO:0007669"/>
    <property type="project" value="UniProtKB-SubCell"/>
</dbReference>
<dbReference type="GO" id="GO:0005886">
    <property type="term" value="C:plasma membrane"/>
    <property type="evidence" value="ECO:0000318"/>
    <property type="project" value="GO_Central"/>
</dbReference>
<dbReference type="GO" id="GO:0043235">
    <property type="term" value="C:receptor complex"/>
    <property type="evidence" value="ECO:0000250"/>
    <property type="project" value="HGNC-UCL"/>
</dbReference>
<dbReference type="GO" id="GO:0004941">
    <property type="term" value="F:beta2-adrenergic receptor activity"/>
    <property type="evidence" value="ECO:0000250"/>
    <property type="project" value="HGNC-UCL"/>
</dbReference>
<dbReference type="GO" id="GO:0051380">
    <property type="term" value="F:norepinephrine binding"/>
    <property type="evidence" value="ECO:0000250"/>
    <property type="project" value="HGNC-UCL"/>
</dbReference>
<dbReference type="GO" id="GO:0042803">
    <property type="term" value="F:protein homodimerization activity"/>
    <property type="evidence" value="ECO:0000250"/>
    <property type="project" value="HGNC-UCL"/>
</dbReference>
<dbReference type="GO" id="GO:0071880">
    <property type="term" value="P:adenylate cyclase-activating adrenergic receptor signaling pathway"/>
    <property type="evidence" value="ECO:0000250"/>
    <property type="project" value="HGNC-UCL"/>
</dbReference>
<dbReference type="GO" id="GO:0045744">
    <property type="term" value="P:negative regulation of G protein-coupled receptor signaling pathway"/>
    <property type="evidence" value="ECO:0000250"/>
    <property type="project" value="HGNC-UCL"/>
</dbReference>
<dbReference type="GO" id="GO:0002025">
    <property type="term" value="P:norepinephrine-epinephrine-mediated vasodilation involved in regulation of systemic arterial blood pressure"/>
    <property type="evidence" value="ECO:0000318"/>
    <property type="project" value="GO_Central"/>
</dbReference>
<dbReference type="GO" id="GO:1901098">
    <property type="term" value="P:positive regulation of autophagosome maturation"/>
    <property type="evidence" value="ECO:0000250"/>
    <property type="project" value="GO_Central"/>
</dbReference>
<dbReference type="GO" id="GO:1904504">
    <property type="term" value="P:positive regulation of lipophagy"/>
    <property type="evidence" value="ECO:0000250"/>
    <property type="project" value="GO_Central"/>
</dbReference>
<dbReference type="GO" id="GO:0043410">
    <property type="term" value="P:positive regulation of MAPK cascade"/>
    <property type="evidence" value="ECO:0000250"/>
    <property type="project" value="HGNC-UCL"/>
</dbReference>
<dbReference type="GO" id="GO:0006898">
    <property type="term" value="P:receptor-mediated endocytosis"/>
    <property type="evidence" value="ECO:0000250"/>
    <property type="project" value="HGNC-UCL"/>
</dbReference>
<dbReference type="GO" id="GO:0006940">
    <property type="term" value="P:regulation of smooth muscle contraction"/>
    <property type="evidence" value="ECO:0007669"/>
    <property type="project" value="InterPro"/>
</dbReference>
<dbReference type="CDD" id="cd15957">
    <property type="entry name" value="7tmA_Beta2_AR"/>
    <property type="match status" value="1"/>
</dbReference>
<dbReference type="FunFam" id="1.20.1070.10:FF:000057">
    <property type="entry name" value="Beta-1 adrenergic receptor"/>
    <property type="match status" value="1"/>
</dbReference>
<dbReference type="Gene3D" id="1.20.1070.10">
    <property type="entry name" value="Rhodopsin 7-helix transmembrane proteins"/>
    <property type="match status" value="1"/>
</dbReference>
<dbReference type="InterPro" id="IPR002233">
    <property type="entry name" value="ADR_fam"/>
</dbReference>
<dbReference type="InterPro" id="IPR000332">
    <property type="entry name" value="ADRB2_rcpt"/>
</dbReference>
<dbReference type="InterPro" id="IPR000276">
    <property type="entry name" value="GPCR_Rhodpsn"/>
</dbReference>
<dbReference type="InterPro" id="IPR017452">
    <property type="entry name" value="GPCR_Rhodpsn_7TM"/>
</dbReference>
<dbReference type="PANTHER" id="PTHR24248">
    <property type="entry name" value="ADRENERGIC RECEPTOR-RELATED G-PROTEIN COUPLED RECEPTOR"/>
    <property type="match status" value="1"/>
</dbReference>
<dbReference type="PANTHER" id="PTHR24248:SF21">
    <property type="entry name" value="BETA-2 ADRENERGIC RECEPTOR"/>
    <property type="match status" value="1"/>
</dbReference>
<dbReference type="Pfam" id="PF00001">
    <property type="entry name" value="7tm_1"/>
    <property type="match status" value="1"/>
</dbReference>
<dbReference type="PRINTS" id="PR01103">
    <property type="entry name" value="ADRENERGICR"/>
</dbReference>
<dbReference type="PRINTS" id="PR00562">
    <property type="entry name" value="ADRENRGCB2AR"/>
</dbReference>
<dbReference type="PRINTS" id="PR00237">
    <property type="entry name" value="GPCRRHODOPSN"/>
</dbReference>
<dbReference type="SMART" id="SM01381">
    <property type="entry name" value="7TM_GPCR_Srsx"/>
    <property type="match status" value="1"/>
</dbReference>
<dbReference type="SUPFAM" id="SSF81321">
    <property type="entry name" value="Family A G protein-coupled receptor-like"/>
    <property type="match status" value="1"/>
</dbReference>
<dbReference type="PROSITE" id="PS00237">
    <property type="entry name" value="G_PROTEIN_RECEP_F1_1"/>
    <property type="match status" value="1"/>
</dbReference>
<dbReference type="PROSITE" id="PS50262">
    <property type="entry name" value="G_PROTEIN_RECEP_F1_2"/>
    <property type="match status" value="1"/>
</dbReference>
<name>ADRB2_PIG</name>
<accession>Q28997</accession>
<accession>O02779</accession>
<accession>Q6QTF6</accession>
<keyword id="KW-1003">Cell membrane</keyword>
<keyword id="KW-1015">Disulfide bond</keyword>
<keyword id="KW-0967">Endosome</keyword>
<keyword id="KW-0297">G-protein coupled receptor</keyword>
<keyword id="KW-0325">Glycoprotein</keyword>
<keyword id="KW-0333">Golgi apparatus</keyword>
<keyword id="KW-0379">Hydroxylation</keyword>
<keyword id="KW-0449">Lipoprotein</keyword>
<keyword id="KW-0472">Membrane</keyword>
<keyword id="KW-0564">Palmitate</keyword>
<keyword id="KW-0597">Phosphoprotein</keyword>
<keyword id="KW-0675">Receptor</keyword>
<keyword id="KW-1185">Reference proteome</keyword>
<keyword id="KW-0807">Transducer</keyword>
<keyword id="KW-0812">Transmembrane</keyword>
<keyword id="KW-1133">Transmembrane helix</keyword>
<keyword id="KW-0832">Ubl conjugation</keyword>
<feature type="chain" id="PRO_0000069135" description="Beta-2 adrenergic receptor">
    <location>
        <begin position="1"/>
        <end position="418"/>
    </location>
</feature>
<feature type="topological domain" description="Extracellular" evidence="1">
    <location>
        <begin position="1"/>
        <end position="34"/>
    </location>
</feature>
<feature type="transmembrane region" description="Helical; Name=1" evidence="1">
    <location>
        <begin position="35"/>
        <end position="58"/>
    </location>
</feature>
<feature type="topological domain" description="Cytoplasmic" evidence="1">
    <location>
        <begin position="59"/>
        <end position="71"/>
    </location>
</feature>
<feature type="transmembrane region" description="Helical; Name=2" evidence="1">
    <location>
        <begin position="72"/>
        <end position="95"/>
    </location>
</feature>
<feature type="topological domain" description="Extracellular" evidence="1">
    <location>
        <begin position="96"/>
        <end position="106"/>
    </location>
</feature>
<feature type="transmembrane region" description="Helical; Name=3" evidence="1">
    <location>
        <begin position="107"/>
        <end position="129"/>
    </location>
</feature>
<feature type="topological domain" description="Cytoplasmic" evidence="1">
    <location>
        <begin position="130"/>
        <end position="150"/>
    </location>
</feature>
<feature type="transmembrane region" description="Helical; Name=4" evidence="1">
    <location>
        <begin position="151"/>
        <end position="174"/>
    </location>
</feature>
<feature type="topological domain" description="Extracellular" evidence="1">
    <location>
        <begin position="175"/>
        <end position="196"/>
    </location>
</feature>
<feature type="transmembrane region" description="Helical; Name=5" evidence="1">
    <location>
        <begin position="197"/>
        <end position="220"/>
    </location>
</feature>
<feature type="topological domain" description="Cytoplasmic" evidence="1">
    <location>
        <begin position="221"/>
        <end position="274"/>
    </location>
</feature>
<feature type="transmembrane region" description="Helical; Name=6" evidence="1">
    <location>
        <begin position="275"/>
        <end position="298"/>
    </location>
</feature>
<feature type="topological domain" description="Extracellular" evidence="1">
    <location>
        <begin position="299"/>
        <end position="305"/>
    </location>
</feature>
<feature type="transmembrane region" description="Helical; Name=7" evidence="1">
    <location>
        <begin position="306"/>
        <end position="329"/>
    </location>
</feature>
<feature type="topological domain" description="Cytoplasmic" evidence="1">
    <location>
        <begin position="330"/>
        <end position="418"/>
    </location>
</feature>
<feature type="region of interest" description="Disordered" evidence="5">
    <location>
        <begin position="381"/>
        <end position="418"/>
    </location>
</feature>
<feature type="short sequence motif" description="PDZ-binding">
    <location>
        <begin position="415"/>
        <end position="418"/>
    </location>
</feature>
<feature type="compositionally biased region" description="Polar residues" evidence="5">
    <location>
        <begin position="405"/>
        <end position="418"/>
    </location>
</feature>
<feature type="modified residue" description="Phosphotyrosine" evidence="2">
    <location>
        <position position="141"/>
    </location>
</feature>
<feature type="modified residue" description="Phosphoserine" evidence="2">
    <location>
        <position position="246"/>
    </location>
</feature>
<feature type="modified residue" description="Phosphoserine; by PKA" evidence="3">
    <location>
        <position position="261"/>
    </location>
</feature>
<feature type="modified residue" description="Phosphoserine; by PKA" evidence="3">
    <location>
        <position position="262"/>
    </location>
</feature>
<feature type="modified residue" description="Phosphoserine; by PKA" evidence="2">
    <location>
        <position position="345"/>
    </location>
</feature>
<feature type="modified residue" description="Phosphoserine; by PKA" evidence="2">
    <location>
        <position position="346"/>
    </location>
</feature>
<feature type="modified residue" description="Phosphoserine; by BARK" evidence="7">
    <location>
        <position position="355"/>
    </location>
</feature>
<feature type="modified residue" description="Phosphoserine; by BARK" evidence="7">
    <location>
        <position position="356"/>
    </location>
</feature>
<feature type="modified residue" description="4-hydroxyproline" evidence="1">
    <location>
        <position position="387"/>
    </location>
</feature>
<feature type="modified residue" description="4-hydroxyproline" evidence="1">
    <location>
        <position position="400"/>
    </location>
</feature>
<feature type="lipid moiety-binding region" description="S-palmitoyl cysteine" evidence="2">
    <location>
        <position position="265"/>
    </location>
</feature>
<feature type="lipid moiety-binding region" description="S-palmitoyl cysteine" evidence="2">
    <location>
        <position position="341"/>
    </location>
</feature>
<feature type="glycosylation site" description="N-linked (GlcNAc...) asparagine" evidence="3">
    <location>
        <position position="6"/>
    </location>
</feature>
<feature type="glycosylation site" description="N-linked (GlcNAc...) asparagine" evidence="3">
    <location>
        <position position="15"/>
    </location>
</feature>
<feature type="disulfide bond" evidence="4">
    <location>
        <begin position="106"/>
        <end position="191"/>
    </location>
</feature>
<feature type="disulfide bond" evidence="4">
    <location>
        <begin position="184"/>
        <end position="190"/>
    </location>
</feature>
<feature type="sequence conflict" description="In Ref. 3; AAB01978." evidence="7" ref="3">
    <original>V</original>
    <variation>M</variation>
    <location>
        <position position="152"/>
    </location>
</feature>
<feature type="sequence conflict" description="In Ref. 3; AAB01978." evidence="7" ref="3">
    <original>V</original>
    <variation>I</variation>
    <location>
        <position position="159"/>
    </location>
</feature>
<feature type="sequence conflict" description="In Ref. 3; AAB01978." evidence="7" ref="3">
    <original>I</original>
    <variation>T</variation>
    <location>
        <position position="164"/>
    </location>
</feature>
<feature type="sequence conflict" description="In Ref. 3; AAB01978." evidence="7" ref="3">
    <original>K</original>
    <variation>Q</variation>
    <location>
        <position position="170"/>
    </location>
</feature>
<feature type="sequence conflict" description="In Ref. 3; AAB01978." evidence="7" ref="3">
    <original>Q</original>
    <variation>R</variation>
    <location>
        <position position="175"/>
    </location>
</feature>
<feature type="sequence conflict" description="In Ref. 3; AAB01978." evidence="7" ref="3">
    <original>REALNCYAEEA</original>
    <variation>QKAIDCYHKET</variation>
    <location>
        <begin position="179"/>
        <end position="189"/>
    </location>
</feature>
<feature type="sequence conflict" description="In Ref. 3; AAB01978." evidence="7" ref="3">
    <original>P</original>
    <variation>A</variation>
    <location>
        <position position="198"/>
    </location>
</feature>
<feature type="sequence conflict" description="In Ref. 3; AAB01978." evidence="7" ref="3">
    <original>L</original>
    <variation>V</variation>
    <location>
        <position position="210"/>
    </location>
</feature>
<feature type="sequence conflict" description="In Ref. 3; AAB01978." evidence="7" ref="3">
    <original>R</original>
    <variation>K</variation>
    <location>
        <position position="227"/>
    </location>
</feature>
<feature type="sequence conflict" description="In Ref. 3; AAB01978." evidence="7" ref="3">
    <original>AQ</original>
    <variation>SP</variation>
    <location>
        <begin position="242"/>
        <end position="243"/>
    </location>
</feature>
<feature type="sequence conflict" description="In Ref. 3; AAB01978." evidence="7" ref="3">
    <original>SQA</original>
    <variation>GQV</variation>
    <location>
        <begin position="246"/>
        <end position="248"/>
    </location>
</feature>
<feature type="sequence conflict" description="In Ref. 2; AAS18308." evidence="7" ref="2">
    <original>DA</original>
    <variation>EP</variation>
    <location>
        <begin position="385"/>
        <end position="386"/>
    </location>
</feature>
<reference key="1">
    <citation type="submission" date="1997-06" db="EMBL/GenBank/DDBJ databases">
        <title>Molecular cloning of the porcine beta-2-adrenergic receptor gene.</title>
        <authorList>
            <person name="Liang W."/>
            <person name="Bidwell C.A."/>
            <person name="Williams S.K."/>
            <person name="Mills S.E."/>
        </authorList>
    </citation>
    <scope>NUCLEOTIDE SEQUENCE [GENOMIC DNA]</scope>
    <source>
        <tissue>Blood</tissue>
    </source>
</reference>
<reference key="2">
    <citation type="submission" date="2004-01" db="EMBL/GenBank/DDBJ databases">
        <title>Molecular cloning of the porcine beta-2-adrenergic receptor gene.</title>
        <authorList>
            <person name="Li W.F."/>
            <person name="Nie C."/>
            <person name="Zhou X.X."/>
            <person name="Lu P."/>
            <person name="Yao J.T."/>
            <person name="Feng J."/>
        </authorList>
    </citation>
    <scope>NUCLEOTIDE SEQUENCE [GENOMIC DNA]</scope>
</reference>
<reference key="3">
    <citation type="journal article" date="1999" name="J. Anim. Sci.">
        <title>Distribution and quantification of beta1-, beta2-, and beta3-adrenergic receptor subtype transcripts in porcine tissues.</title>
        <authorList>
            <person name="McNeel R.L."/>
            <person name="Mersmann H.J."/>
        </authorList>
    </citation>
    <scope>NUCLEOTIDE SEQUENCE [MRNA] OF 144-252</scope>
    <scope>TISSUE SPECIFICITY</scope>
</reference>
<organism>
    <name type="scientific">Sus scrofa</name>
    <name type="common">Pig</name>
    <dbReference type="NCBI Taxonomy" id="9823"/>
    <lineage>
        <taxon>Eukaryota</taxon>
        <taxon>Metazoa</taxon>
        <taxon>Chordata</taxon>
        <taxon>Craniata</taxon>
        <taxon>Vertebrata</taxon>
        <taxon>Euteleostomi</taxon>
        <taxon>Mammalia</taxon>
        <taxon>Eutheria</taxon>
        <taxon>Laurasiatheria</taxon>
        <taxon>Artiodactyla</taxon>
        <taxon>Suina</taxon>
        <taxon>Suidae</taxon>
        <taxon>Sus</taxon>
    </lineage>
</organism>
<sequence>MGQPGNRSVFLLAPNGSHAPDQDVPQERDEAWVVGMAIVMSLIVLAIVFGNVLVITAIAKFERLQTVTNYFITSLACADLVMGLAVVPFGASHILMKMWTFGSFWCEFWISIDVLCVTASIETLCVIAVDRYLAITSPFKYQCLLTKNKARVVILMVWVVSGLISFLPIKMHWYQATHREALNCYAEEACCDFFTNQPYAIASSIVSFYLPLVVMVFVYSRVFQVARRQLQKIDKSEGRFHAQNLSQAEQDGRSGPGHRRSSKFCLKEHKALKTLGIIMGTFTLCWLPFFIVNIVHGIHDNLIPKEVYILLNWVGYVNSAFNPLIYCRSPDFRMAFQELLCLHRSSLKAYGNGCSSNSNGRTDYTGEQSGCYLGEEKDSERLCEDAPGPEGCAHRQGTVPDDSTDSQGRNCSTNDSML</sequence>
<comment type="function">
    <text evidence="2">Beta-adrenergic receptors mediate the catecholamine-induced activation of adenylate cyclase through the action of G proteins. The beta-2-adrenergic receptor binds epinephrine with an approximately 30-fold greater affinity than it does norepinephrine (By similarity).</text>
</comment>
<comment type="subunit">
    <text evidence="2">Binds NHERF1 and GPRASP1. Interacts with ARRB1 and ARRB2. Interacts with SRC (By similarity). Interacts with USP20 and USP33 (By similarity). Interacts with VHL; the interaction, which is increased on hydroxylation of ADRB2, ubiquitinates ADRB2 leading to its degradation. Interacts with EGLN3; the interaction hydroxylates ADRB2 facilitating VHL-E3 ligase-mediated ubiquitination. Interacts (via PDZ-binding motif) with SNX27 (via PDZ domain); the interaction is required when endocytosed to prevent degradation in lysosomes and promote recycling to the plasma membrane. Interacts with CNIH4. Interacts with ARRDC3. Interacts with NEDD4 (By similarity). Interacts with MARCHF2 (By similarity).</text>
</comment>
<comment type="subcellular location">
    <subcellularLocation>
        <location evidence="2">Cell membrane</location>
        <topology evidence="2">Multi-pass membrane protein</topology>
    </subcellularLocation>
    <subcellularLocation>
        <location evidence="2">Early endosome</location>
    </subcellularLocation>
    <subcellularLocation>
        <location evidence="2">Golgi apparatus</location>
    </subcellularLocation>
    <text evidence="2">Colocalizes with VHL at the cell membrane. Activated receptors are internalized into endosomes prior to their degradation in lysosomes. Activated receptors are also detected within the Golgi apparatus.</text>
</comment>
<comment type="tissue specificity">
    <text evidence="6">Expressed in heart, liver, lung, skeletal muscle and subcutaneous adipose tissue.</text>
</comment>
<comment type="PTM">
    <text evidence="1">Palmitoylated; may reduce accessibility of Ser-345 and Ser-346 by anchoring Cys-341 to the plasma membrane. Agonist stimulation promotes depalmitoylation and further allows Ser-345 and Ser-346 phosphorylation (By similarity).</text>
</comment>
<comment type="PTM">
    <text>Phosphorylated by PKA and BARK upon agonist stimulation, which mediates homologous desensitization of the receptor. PKA-mediated phosphorylation seems to facilitate phosphorylation by BARK.</text>
</comment>
<comment type="PTM">
    <text evidence="1">Phosphorylation of Tyr-141 is induced by insulin and leads to supersensitization of the receptor.</text>
</comment>
<comment type="PTM">
    <text evidence="1">Polyubiquitinated. Agonist-induced ubiquitination leads to sort internalized receptors to the lysosomes for degradation. Deubiquitination by USP20 and USP33, leads to ADRB2 recycling and resensitization after prolonged agonist stimulation. USP20 and USP33 are constitutively associated and are dissociated immediately after agonist stimulation. Ubiquitination by the VHL-E3 ligase complex is oxygen-dependent (By similarity).</text>
</comment>
<comment type="PTM">
    <text evidence="1">Hydroxylation by EGLN3 occurs only under normoxia and increases the interaction with VHL and the subsequent ubiquitination and degradation of ADRB2.</text>
</comment>
<comment type="PTM">
    <text evidence="2">Palmitoylated. Mainly palmitoylated at Cys-341. Palmitoylation may reduce accessibility of phosphorylation sites by anchoring the receptor to the plasma membrane. Agonist stimulation promotes depalmitoylation and further allows Ser-345 and Ser-346 phosphorylation. Also undergoes transient, ligand-induced palmitoylation at Cys-265 probably by ZDHHC9, ZDHHC14 and ZDHHC18 within the Golgi. Palmitoylation at Cys-265 requires phosphorylation by PKA and receptor internalization and stabilizes the receptor. Could be depalmitoylated by LYPLA1 at the plasma membrane.</text>
</comment>
<comment type="similarity">
    <text evidence="4">Belongs to the G-protein coupled receptor 1 family. Adrenergic receptor subfamily. ADRB2 sub-subfamily.</text>
</comment>
<gene>
    <name type="primary">ADRB2</name>
</gene>
<proteinExistence type="evidence at transcript level"/>